<accession>Q1CG96</accession>
<accession>C4GW09</accession>
<sequence>MTTNYAHYIDHTLLAMDATEAQIIKLCEEAKQHHFYAVCVNSGYVPVAAQQLAGSSVKVCSVIGFPLGAGLTAAKAFEAQAAINAGAQEIDMVINVGWLKSGKIADVKADIKAVRDNCAATPLKVILETCLLSDEQIVQVCEMCRELDVAFVKTSTGFSTGGAKEEHVKLMRATVGPVMGVKASGAVRDRATAETMIQAGATRIGTSSGVAIVSGQQAAASGY</sequence>
<feature type="chain" id="PRO_1000015343" description="Deoxyribose-phosphate aldolase">
    <location>
        <begin position="1"/>
        <end position="223"/>
    </location>
</feature>
<feature type="active site" description="Proton donor/acceptor" evidence="1">
    <location>
        <position position="91"/>
    </location>
</feature>
<feature type="active site" description="Schiff-base intermediate with acetaldehyde" evidence="1">
    <location>
        <position position="153"/>
    </location>
</feature>
<feature type="active site" description="Proton donor/acceptor" evidence="1">
    <location>
        <position position="182"/>
    </location>
</feature>
<protein>
    <recommendedName>
        <fullName evidence="1">Deoxyribose-phosphate aldolase</fullName>
        <shortName evidence="1">DERA</shortName>
        <ecNumber evidence="1">4.1.2.4</ecNumber>
    </recommendedName>
    <alternativeName>
        <fullName evidence="1">2-deoxy-D-ribose 5-phosphate aldolase</fullName>
    </alternativeName>
    <alternativeName>
        <fullName evidence="1">Phosphodeoxyriboaldolase</fullName>
        <shortName evidence="1">Deoxyriboaldolase</shortName>
    </alternativeName>
</protein>
<dbReference type="EC" id="4.1.2.4" evidence="1"/>
<dbReference type="EMBL" id="CP000305">
    <property type="protein sequence ID" value="ABG18984.1"/>
    <property type="molecule type" value="Genomic_DNA"/>
</dbReference>
<dbReference type="EMBL" id="ACNQ01000017">
    <property type="protein sequence ID" value="EEO75109.1"/>
    <property type="molecule type" value="Genomic_DNA"/>
</dbReference>
<dbReference type="RefSeq" id="WP_002208769.1">
    <property type="nucleotide sequence ID" value="NZ_ACNQ01000017.1"/>
</dbReference>
<dbReference type="SMR" id="Q1CG96"/>
<dbReference type="GeneID" id="57977455"/>
<dbReference type="KEGG" id="ypn:YPN_2656"/>
<dbReference type="HOGENOM" id="CLU_053595_0_1_6"/>
<dbReference type="UniPathway" id="UPA00002">
    <property type="reaction ID" value="UER00468"/>
</dbReference>
<dbReference type="Proteomes" id="UP000008936">
    <property type="component" value="Chromosome"/>
</dbReference>
<dbReference type="GO" id="GO:0005737">
    <property type="term" value="C:cytoplasm"/>
    <property type="evidence" value="ECO:0007669"/>
    <property type="project" value="UniProtKB-SubCell"/>
</dbReference>
<dbReference type="GO" id="GO:0004139">
    <property type="term" value="F:deoxyribose-phosphate aldolase activity"/>
    <property type="evidence" value="ECO:0007669"/>
    <property type="project" value="UniProtKB-UniRule"/>
</dbReference>
<dbReference type="GO" id="GO:0006018">
    <property type="term" value="P:2-deoxyribose 1-phosphate catabolic process"/>
    <property type="evidence" value="ECO:0007669"/>
    <property type="project" value="UniProtKB-UniRule"/>
</dbReference>
<dbReference type="GO" id="GO:0016052">
    <property type="term" value="P:carbohydrate catabolic process"/>
    <property type="evidence" value="ECO:0007669"/>
    <property type="project" value="TreeGrafter"/>
</dbReference>
<dbReference type="GO" id="GO:0009264">
    <property type="term" value="P:deoxyribonucleotide catabolic process"/>
    <property type="evidence" value="ECO:0007669"/>
    <property type="project" value="InterPro"/>
</dbReference>
<dbReference type="CDD" id="cd00959">
    <property type="entry name" value="DeoC"/>
    <property type="match status" value="1"/>
</dbReference>
<dbReference type="FunFam" id="3.20.20.70:FF:000044">
    <property type="entry name" value="Deoxyribose-phosphate aldolase"/>
    <property type="match status" value="1"/>
</dbReference>
<dbReference type="Gene3D" id="3.20.20.70">
    <property type="entry name" value="Aldolase class I"/>
    <property type="match status" value="1"/>
</dbReference>
<dbReference type="HAMAP" id="MF_00114">
    <property type="entry name" value="DeoC_type1"/>
    <property type="match status" value="1"/>
</dbReference>
<dbReference type="InterPro" id="IPR013785">
    <property type="entry name" value="Aldolase_TIM"/>
</dbReference>
<dbReference type="InterPro" id="IPR011343">
    <property type="entry name" value="DeoC"/>
</dbReference>
<dbReference type="InterPro" id="IPR002915">
    <property type="entry name" value="DeoC/FbaB/LacD_aldolase"/>
</dbReference>
<dbReference type="InterPro" id="IPR028581">
    <property type="entry name" value="DeoC_typeI"/>
</dbReference>
<dbReference type="NCBIfam" id="TIGR00126">
    <property type="entry name" value="deoC"/>
    <property type="match status" value="1"/>
</dbReference>
<dbReference type="PANTHER" id="PTHR10889">
    <property type="entry name" value="DEOXYRIBOSE-PHOSPHATE ALDOLASE"/>
    <property type="match status" value="1"/>
</dbReference>
<dbReference type="PANTHER" id="PTHR10889:SF1">
    <property type="entry name" value="DEOXYRIBOSE-PHOSPHATE ALDOLASE"/>
    <property type="match status" value="1"/>
</dbReference>
<dbReference type="Pfam" id="PF01791">
    <property type="entry name" value="DeoC"/>
    <property type="match status" value="1"/>
</dbReference>
<dbReference type="PIRSF" id="PIRSF001357">
    <property type="entry name" value="DeoC"/>
    <property type="match status" value="1"/>
</dbReference>
<dbReference type="SMART" id="SM01133">
    <property type="entry name" value="DeoC"/>
    <property type="match status" value="1"/>
</dbReference>
<dbReference type="SUPFAM" id="SSF51569">
    <property type="entry name" value="Aldolase"/>
    <property type="match status" value="1"/>
</dbReference>
<proteinExistence type="inferred from homology"/>
<reference key="1">
    <citation type="journal article" date="2006" name="J. Bacteriol.">
        <title>Complete genome sequence of Yersinia pestis strains Antiqua and Nepal516: evidence of gene reduction in an emerging pathogen.</title>
        <authorList>
            <person name="Chain P.S.G."/>
            <person name="Hu P."/>
            <person name="Malfatti S.A."/>
            <person name="Radnedge L."/>
            <person name="Larimer F."/>
            <person name="Vergez L.M."/>
            <person name="Worsham P."/>
            <person name="Chu M.C."/>
            <person name="Andersen G.L."/>
        </authorList>
    </citation>
    <scope>NUCLEOTIDE SEQUENCE [LARGE SCALE GENOMIC DNA]</scope>
    <source>
        <strain>Nepal516</strain>
    </source>
</reference>
<reference key="2">
    <citation type="submission" date="2009-04" db="EMBL/GenBank/DDBJ databases">
        <title>Yersinia pestis Nepal516A whole genome shotgun sequencing project.</title>
        <authorList>
            <person name="Plunkett G. III"/>
            <person name="Anderson B.D."/>
            <person name="Baumler D.J."/>
            <person name="Burland V."/>
            <person name="Cabot E.L."/>
            <person name="Glasner J.D."/>
            <person name="Mau B."/>
            <person name="Neeno-Eckwall E."/>
            <person name="Perna N.T."/>
            <person name="Munk A.C."/>
            <person name="Tapia R."/>
            <person name="Green L.D."/>
            <person name="Rogers Y.C."/>
            <person name="Detter J.C."/>
            <person name="Bruce D.C."/>
            <person name="Brettin T.S."/>
        </authorList>
    </citation>
    <scope>NUCLEOTIDE SEQUENCE [LARGE SCALE GENOMIC DNA]</scope>
    <source>
        <strain>Nepal516</strain>
    </source>
</reference>
<gene>
    <name evidence="1" type="primary">deoC</name>
    <name type="ordered locus">YPN_2656</name>
    <name type="ORF">YP516_2996</name>
</gene>
<evidence type="ECO:0000255" key="1">
    <source>
        <dbReference type="HAMAP-Rule" id="MF_00114"/>
    </source>
</evidence>
<comment type="function">
    <text evidence="1">Catalyzes a reversible aldol reaction between acetaldehyde and D-glyceraldehyde 3-phosphate to generate 2-deoxy-D-ribose 5-phosphate.</text>
</comment>
<comment type="catalytic activity">
    <reaction evidence="1">
        <text>2-deoxy-D-ribose 5-phosphate = D-glyceraldehyde 3-phosphate + acetaldehyde</text>
        <dbReference type="Rhea" id="RHEA:12821"/>
        <dbReference type="ChEBI" id="CHEBI:15343"/>
        <dbReference type="ChEBI" id="CHEBI:59776"/>
        <dbReference type="ChEBI" id="CHEBI:62877"/>
        <dbReference type="EC" id="4.1.2.4"/>
    </reaction>
</comment>
<comment type="pathway">
    <text evidence="1">Carbohydrate degradation; 2-deoxy-D-ribose 1-phosphate degradation; D-glyceraldehyde 3-phosphate and acetaldehyde from 2-deoxy-alpha-D-ribose 1-phosphate: step 2/2.</text>
</comment>
<comment type="subcellular location">
    <subcellularLocation>
        <location evidence="1">Cytoplasm</location>
    </subcellularLocation>
</comment>
<comment type="similarity">
    <text evidence="1">Belongs to the DeoC/FbaB aldolase family. DeoC type 1 subfamily.</text>
</comment>
<keyword id="KW-0963">Cytoplasm</keyword>
<keyword id="KW-0456">Lyase</keyword>
<keyword id="KW-0704">Schiff base</keyword>
<name>DEOC_YERPN</name>
<organism>
    <name type="scientific">Yersinia pestis bv. Antiqua (strain Nepal516)</name>
    <dbReference type="NCBI Taxonomy" id="377628"/>
    <lineage>
        <taxon>Bacteria</taxon>
        <taxon>Pseudomonadati</taxon>
        <taxon>Pseudomonadota</taxon>
        <taxon>Gammaproteobacteria</taxon>
        <taxon>Enterobacterales</taxon>
        <taxon>Yersiniaceae</taxon>
        <taxon>Yersinia</taxon>
    </lineage>
</organism>